<comment type="function">
    <text evidence="1">In elementary bodies (EBs, the infectious stage, which is able to survive outside the host cell) provides the structural integrity of the outer envelope through disulfide cross-links with the small cysteine-rich protein and the major outer membrane porin. It has been described in publications as the Sarkosyl-insoluble COMC (Chlamydia outer membrane complex), and serves as the functional equivalent of peptidoglycan. It is present but the disulfide bonds are reduced in reticulate bodies (RBs) (By similarity).</text>
</comment>
<comment type="subunit">
    <text evidence="1">Part of a disulfide cross-linked outer membrane complex (COMC) composed of the major outer membrane porin (MOMP), the small cysteine-rich protein (OmcA) and the large cysteine-rich periplasmic protein (OmcB).</text>
</comment>
<comment type="subcellular location">
    <subcellularLocation>
        <location evidence="4">Periplasm</location>
    </subcellularLocation>
</comment>
<comment type="caution">
    <text evidence="4">Was thought to be an outer membrane protein as it is part of a disulfide cross-linked complex that is insoluble in the detergent Sarkosyl; however based on experiments in C.psittaci it is likely to be periplasmic.</text>
</comment>
<comment type="sequence caution" evidence="4">
    <conflict type="erroneous initiation">
        <sequence resource="EMBL-CDS" id="AAX50715"/>
    </conflict>
</comment>
<name>OMCB_CHLTA</name>
<proteinExistence type="inferred from homology"/>
<dbReference type="EMBL" id="CP000051">
    <property type="protein sequence ID" value="AAX50715.1"/>
    <property type="status" value="ALT_INIT"/>
    <property type="molecule type" value="Genomic_DNA"/>
</dbReference>
<dbReference type="RefSeq" id="WP_009873002.1">
    <property type="nucleotide sequence ID" value="NC_007429.1"/>
</dbReference>
<dbReference type="KEGG" id="cta:CTA_0483"/>
<dbReference type="HOGENOM" id="CLU_029611_0_0_0"/>
<dbReference type="Proteomes" id="UP000002532">
    <property type="component" value="Chromosome"/>
</dbReference>
<dbReference type="GO" id="GO:0042597">
    <property type="term" value="C:periplasmic space"/>
    <property type="evidence" value="ECO:0007669"/>
    <property type="project" value="UniProtKB-SubCell"/>
</dbReference>
<dbReference type="GO" id="GO:0005201">
    <property type="term" value="F:extracellular matrix structural constituent"/>
    <property type="evidence" value="ECO:0007669"/>
    <property type="project" value="InterPro"/>
</dbReference>
<dbReference type="GO" id="GO:0008360">
    <property type="term" value="P:regulation of cell shape"/>
    <property type="evidence" value="ECO:0007669"/>
    <property type="project" value="UniProtKB-KW"/>
</dbReference>
<dbReference type="Gene3D" id="2.60.40.10">
    <property type="entry name" value="Immunoglobulins"/>
    <property type="match status" value="1"/>
</dbReference>
<dbReference type="InterPro" id="IPR003506">
    <property type="entry name" value="Chlam_OMP6"/>
</dbReference>
<dbReference type="InterPro" id="IPR051172">
    <property type="entry name" value="Chlamydia_OmcB"/>
</dbReference>
<dbReference type="InterPro" id="IPR047589">
    <property type="entry name" value="DUF11_rpt"/>
</dbReference>
<dbReference type="InterPro" id="IPR013783">
    <property type="entry name" value="Ig-like_fold"/>
</dbReference>
<dbReference type="InterPro" id="IPR001434">
    <property type="entry name" value="OmcB-like_DUF11"/>
</dbReference>
<dbReference type="NCBIfam" id="TIGR01451">
    <property type="entry name" value="B_ant_repeat"/>
    <property type="match status" value="1"/>
</dbReference>
<dbReference type="PANTHER" id="PTHR34819">
    <property type="entry name" value="LARGE CYSTEINE-RICH PERIPLASMIC PROTEIN OMCB"/>
    <property type="match status" value="1"/>
</dbReference>
<dbReference type="PANTHER" id="PTHR34819:SF4">
    <property type="entry name" value="LARGE CYSTEINE-RICH PERIPLASMIC PROTEIN OMCB"/>
    <property type="match status" value="1"/>
</dbReference>
<dbReference type="Pfam" id="PF03504">
    <property type="entry name" value="Chlam_OMP6"/>
    <property type="match status" value="1"/>
</dbReference>
<dbReference type="Pfam" id="PF01345">
    <property type="entry name" value="DUF11"/>
    <property type="match status" value="3"/>
</dbReference>
<dbReference type="PRINTS" id="PR01336">
    <property type="entry name" value="CHLAMIDIAOM6"/>
</dbReference>
<feature type="signal peptide" evidence="2">
    <location>
        <begin position="1"/>
        <end position="22"/>
    </location>
</feature>
<feature type="propeptide" id="PRO_0000248871" evidence="2">
    <location>
        <begin position="23"/>
        <end position="40"/>
    </location>
</feature>
<feature type="chain" id="PRO_0000248872" description="Large cysteine-rich periplasmic protein OmcB">
    <location>
        <begin position="41"/>
        <end position="547"/>
    </location>
</feature>
<feature type="region of interest" description="Disordered" evidence="3">
    <location>
        <begin position="45"/>
        <end position="84"/>
    </location>
</feature>
<feature type="compositionally biased region" description="Basic residues" evidence="3">
    <location>
        <begin position="52"/>
        <end position="61"/>
    </location>
</feature>
<feature type="compositionally biased region" description="Basic and acidic residues" evidence="3">
    <location>
        <begin position="62"/>
        <end position="79"/>
    </location>
</feature>
<reference key="1">
    <citation type="journal article" date="2005" name="Infect. Immun.">
        <title>Comparative genomic analysis of Chlamydia trachomatis oculotropic and genitotropic strains.</title>
        <authorList>
            <person name="Carlson J.H."/>
            <person name="Porcella S.F."/>
            <person name="McClarty G."/>
            <person name="Caldwell H.D."/>
        </authorList>
    </citation>
    <scope>NUCLEOTIDE SEQUENCE [LARGE SCALE GENOMIC DNA]</scope>
    <source>
        <strain>ATCC VR-571B / DSM 19440 / HAR-13</strain>
    </source>
</reference>
<protein>
    <recommendedName>
        <fullName>Large cysteine-rich periplasmic protein OmcB</fullName>
        <shortName>Large-CRP</shortName>
    </recommendedName>
    <alternativeName>
        <fullName>60 kDa CRP</fullName>
    </alternativeName>
    <alternativeName>
        <fullName>60 kDa outer membrane protein</fullName>
    </alternativeName>
    <alternativeName>
        <fullName>Cysteine-rich outer membrane protein</fullName>
    </alternativeName>
</protein>
<gene>
    <name type="primary">omcB</name>
    <name type="ordered locus">CTA_0483</name>
</gene>
<accession>Q3KLQ7</accession>
<evidence type="ECO:0000250" key="1"/>
<evidence type="ECO:0000255" key="2"/>
<evidence type="ECO:0000256" key="3">
    <source>
        <dbReference type="SAM" id="MobiDB-lite"/>
    </source>
</evidence>
<evidence type="ECO:0000305" key="4"/>
<keyword id="KW-0133">Cell shape</keyword>
<keyword id="KW-1015">Disulfide bond</keyword>
<keyword id="KW-0574">Periplasm</keyword>
<keyword id="KW-0732">Signal</keyword>
<organism>
    <name type="scientific">Chlamydia trachomatis serovar A (strain ATCC VR-571B / DSM 19440 / HAR-13)</name>
    <dbReference type="NCBI Taxonomy" id="315277"/>
    <lineage>
        <taxon>Bacteria</taxon>
        <taxon>Pseudomonadati</taxon>
        <taxon>Chlamydiota</taxon>
        <taxon>Chlamydiia</taxon>
        <taxon>Chlamydiales</taxon>
        <taxon>Chlamydiaceae</taxon>
        <taxon>Chlamydia/Chlamydophila group</taxon>
        <taxon>Chlamydia</taxon>
    </lineage>
</organism>
<sequence>MNKLIRRAVTIFAVTSVASLFASGVLETSMAESLSTNVISLADTKAKDNTSHKSKKARKNHSKETPVDRKEVAPVHESKATGPKQDSCFGRMYTVKVNDDRNVEITQAVPEYATVGSPYPIEITATGKRDCVDVIITQQLPCEAEFVRSDPATTPTADGKLVWKIDRLGQGEKSKITVWVKPLKEGCCFTAATVCACPEIRSVTKCGQPAICVKQEGPENACLRCPVVYKINIVNQGTATARNVVVENPVPDGYAHSSGQRVLTFTLGDMQPGEHRTITVEFCPLKRGRATNIATVSYCGGHKNTASVTTVINEPCVQVSIAGADWSYVCKPVEYVISVSNPGDLVLRDVVVEDTLSPGVTVLEAAGAQISCNKVVWTVKELNPGESLQYKVLVRAQTPGQFTNNVVVKSCSDCGTCTSCAEATTYWKGVAATHMCVVDTCDPVCVGENTVYRICVTNRGSAEDTNVSLMLKFSKELQPVSFSGPTKGTITGNTVVFDSLPRLGSKETVEFSVTLKAVSAGDARGEAILSSDTLTVPVSDTENTHIY</sequence>